<comment type="similarity">
    <text evidence="1">Belongs to the universal ribosomal protein uS2 family.</text>
</comment>
<protein>
    <recommendedName>
        <fullName evidence="1">Small ribosomal subunit protein uS2</fullName>
    </recommendedName>
    <alternativeName>
        <fullName evidence="2">30S ribosomal protein S2</fullName>
    </alternativeName>
</protein>
<keyword id="KW-0687">Ribonucleoprotein</keyword>
<keyword id="KW-0689">Ribosomal protein</keyword>
<accession>A4Y543</accession>
<organism>
    <name type="scientific">Shewanella putrefaciens (strain CN-32 / ATCC BAA-453)</name>
    <dbReference type="NCBI Taxonomy" id="319224"/>
    <lineage>
        <taxon>Bacteria</taxon>
        <taxon>Pseudomonadati</taxon>
        <taxon>Pseudomonadota</taxon>
        <taxon>Gammaproteobacteria</taxon>
        <taxon>Alteromonadales</taxon>
        <taxon>Shewanellaceae</taxon>
        <taxon>Shewanella</taxon>
    </lineage>
</organism>
<evidence type="ECO:0000255" key="1">
    <source>
        <dbReference type="HAMAP-Rule" id="MF_00291"/>
    </source>
</evidence>
<evidence type="ECO:0000305" key="2"/>
<reference key="1">
    <citation type="submission" date="2007-04" db="EMBL/GenBank/DDBJ databases">
        <title>Complete sequence of Shewanella putrefaciens CN-32.</title>
        <authorList>
            <consortium name="US DOE Joint Genome Institute"/>
            <person name="Copeland A."/>
            <person name="Lucas S."/>
            <person name="Lapidus A."/>
            <person name="Barry K."/>
            <person name="Detter J.C."/>
            <person name="Glavina del Rio T."/>
            <person name="Hammon N."/>
            <person name="Israni S."/>
            <person name="Dalin E."/>
            <person name="Tice H."/>
            <person name="Pitluck S."/>
            <person name="Chain P."/>
            <person name="Malfatti S."/>
            <person name="Shin M."/>
            <person name="Vergez L."/>
            <person name="Schmutz J."/>
            <person name="Larimer F."/>
            <person name="Land M."/>
            <person name="Hauser L."/>
            <person name="Kyrpides N."/>
            <person name="Mikhailova N."/>
            <person name="Romine M.F."/>
            <person name="Fredrickson J."/>
            <person name="Tiedje J."/>
            <person name="Richardson P."/>
        </authorList>
    </citation>
    <scope>NUCLEOTIDE SEQUENCE [LARGE SCALE GENOMIC DNA]</scope>
    <source>
        <strain>CN-32 / ATCC BAA-453</strain>
    </source>
</reference>
<name>RS2_SHEPC</name>
<dbReference type="EMBL" id="CP000681">
    <property type="protein sequence ID" value="ABP75076.1"/>
    <property type="molecule type" value="Genomic_DNA"/>
</dbReference>
<dbReference type="SMR" id="A4Y543"/>
<dbReference type="STRING" id="319224.Sputcn32_1348"/>
<dbReference type="KEGG" id="spc:Sputcn32_1348"/>
<dbReference type="eggNOG" id="COG0052">
    <property type="taxonomic scope" value="Bacteria"/>
</dbReference>
<dbReference type="HOGENOM" id="CLU_040318_1_2_6"/>
<dbReference type="GO" id="GO:0022627">
    <property type="term" value="C:cytosolic small ribosomal subunit"/>
    <property type="evidence" value="ECO:0007669"/>
    <property type="project" value="TreeGrafter"/>
</dbReference>
<dbReference type="GO" id="GO:0003735">
    <property type="term" value="F:structural constituent of ribosome"/>
    <property type="evidence" value="ECO:0007669"/>
    <property type="project" value="InterPro"/>
</dbReference>
<dbReference type="GO" id="GO:0006412">
    <property type="term" value="P:translation"/>
    <property type="evidence" value="ECO:0007669"/>
    <property type="project" value="UniProtKB-UniRule"/>
</dbReference>
<dbReference type="CDD" id="cd01425">
    <property type="entry name" value="RPS2"/>
    <property type="match status" value="1"/>
</dbReference>
<dbReference type="FunFam" id="1.10.287.610:FF:000001">
    <property type="entry name" value="30S ribosomal protein S2"/>
    <property type="match status" value="1"/>
</dbReference>
<dbReference type="Gene3D" id="3.40.50.10490">
    <property type="entry name" value="Glucose-6-phosphate isomerase like protein, domain 1"/>
    <property type="match status" value="1"/>
</dbReference>
<dbReference type="Gene3D" id="1.10.287.610">
    <property type="entry name" value="Helix hairpin bin"/>
    <property type="match status" value="1"/>
</dbReference>
<dbReference type="HAMAP" id="MF_00291_B">
    <property type="entry name" value="Ribosomal_uS2_B"/>
    <property type="match status" value="1"/>
</dbReference>
<dbReference type="InterPro" id="IPR001865">
    <property type="entry name" value="Ribosomal_uS2"/>
</dbReference>
<dbReference type="InterPro" id="IPR005706">
    <property type="entry name" value="Ribosomal_uS2_bac/mit/plastid"/>
</dbReference>
<dbReference type="InterPro" id="IPR018130">
    <property type="entry name" value="Ribosomal_uS2_CS"/>
</dbReference>
<dbReference type="InterPro" id="IPR023591">
    <property type="entry name" value="Ribosomal_uS2_flav_dom_sf"/>
</dbReference>
<dbReference type="NCBIfam" id="TIGR01011">
    <property type="entry name" value="rpsB_bact"/>
    <property type="match status" value="1"/>
</dbReference>
<dbReference type="PANTHER" id="PTHR12534">
    <property type="entry name" value="30S RIBOSOMAL PROTEIN S2 PROKARYOTIC AND ORGANELLAR"/>
    <property type="match status" value="1"/>
</dbReference>
<dbReference type="PANTHER" id="PTHR12534:SF0">
    <property type="entry name" value="SMALL RIBOSOMAL SUBUNIT PROTEIN US2M"/>
    <property type="match status" value="1"/>
</dbReference>
<dbReference type="Pfam" id="PF00318">
    <property type="entry name" value="Ribosomal_S2"/>
    <property type="match status" value="1"/>
</dbReference>
<dbReference type="PRINTS" id="PR00395">
    <property type="entry name" value="RIBOSOMALS2"/>
</dbReference>
<dbReference type="SUPFAM" id="SSF52313">
    <property type="entry name" value="Ribosomal protein S2"/>
    <property type="match status" value="1"/>
</dbReference>
<dbReference type="PROSITE" id="PS00962">
    <property type="entry name" value="RIBOSOMAL_S2_1"/>
    <property type="match status" value="1"/>
</dbReference>
<dbReference type="PROSITE" id="PS00963">
    <property type="entry name" value="RIBOSOMAL_S2_2"/>
    <property type="match status" value="1"/>
</dbReference>
<gene>
    <name evidence="1" type="primary">rpsB</name>
    <name type="ordered locus">Sputcn32_1348</name>
</gene>
<sequence>MTTVSMRDMLQAGVHFGHQTRYWNPKMKPFIFGARNGVHIINLEHTVPMFNEALAFISNVASKKGKVLFVGTKRAAGEAIKEAAISCDQYYVDHRWLGGMLTNWKTVRQSIKRLKELESQSVDGTFDKLTKKEALMRTRELEKLEKSLGGIKNMGGLPDVLFVIGADHEHIAIKEANNLGIPVVAVVDTNSAPDGVNYIVPGNDDAMRAIRLYTTSVAAAAKAGRGQDLAVQAEQDGFVEAE</sequence>
<feature type="chain" id="PRO_1000004066" description="Small ribosomal subunit protein uS2">
    <location>
        <begin position="1"/>
        <end position="242"/>
    </location>
</feature>
<proteinExistence type="inferred from homology"/>